<accession>Q9FZD6</accession>
<reference key="1">
    <citation type="journal article" date="2000" name="Nature">
        <title>Sequence and analysis of chromosome 1 of the plant Arabidopsis thaliana.</title>
        <authorList>
            <person name="Theologis A."/>
            <person name="Ecker J.R."/>
            <person name="Palm C.J."/>
            <person name="Federspiel N.A."/>
            <person name="Kaul S."/>
            <person name="White O."/>
            <person name="Alonso J."/>
            <person name="Altafi H."/>
            <person name="Araujo R."/>
            <person name="Bowman C.L."/>
            <person name="Brooks S.Y."/>
            <person name="Buehler E."/>
            <person name="Chan A."/>
            <person name="Chao Q."/>
            <person name="Chen H."/>
            <person name="Cheuk R.F."/>
            <person name="Chin C.W."/>
            <person name="Chung M.K."/>
            <person name="Conn L."/>
            <person name="Conway A.B."/>
            <person name="Conway A.R."/>
            <person name="Creasy T.H."/>
            <person name="Dewar K."/>
            <person name="Dunn P."/>
            <person name="Etgu P."/>
            <person name="Feldblyum T.V."/>
            <person name="Feng J.-D."/>
            <person name="Fong B."/>
            <person name="Fujii C.Y."/>
            <person name="Gill J.E."/>
            <person name="Goldsmith A.D."/>
            <person name="Haas B."/>
            <person name="Hansen N.F."/>
            <person name="Hughes B."/>
            <person name="Huizar L."/>
            <person name="Hunter J.L."/>
            <person name="Jenkins J."/>
            <person name="Johnson-Hopson C."/>
            <person name="Khan S."/>
            <person name="Khaykin E."/>
            <person name="Kim C.J."/>
            <person name="Koo H.L."/>
            <person name="Kremenetskaia I."/>
            <person name="Kurtz D.B."/>
            <person name="Kwan A."/>
            <person name="Lam B."/>
            <person name="Langin-Hooper S."/>
            <person name="Lee A."/>
            <person name="Lee J.M."/>
            <person name="Lenz C.A."/>
            <person name="Li J.H."/>
            <person name="Li Y.-P."/>
            <person name="Lin X."/>
            <person name="Liu S.X."/>
            <person name="Liu Z.A."/>
            <person name="Luros J.S."/>
            <person name="Maiti R."/>
            <person name="Marziali A."/>
            <person name="Militscher J."/>
            <person name="Miranda M."/>
            <person name="Nguyen M."/>
            <person name="Nierman W.C."/>
            <person name="Osborne B.I."/>
            <person name="Pai G."/>
            <person name="Peterson J."/>
            <person name="Pham P.K."/>
            <person name="Rizzo M."/>
            <person name="Rooney T."/>
            <person name="Rowley D."/>
            <person name="Sakano H."/>
            <person name="Salzberg S.L."/>
            <person name="Schwartz J.R."/>
            <person name="Shinn P."/>
            <person name="Southwick A.M."/>
            <person name="Sun H."/>
            <person name="Tallon L.J."/>
            <person name="Tambunga G."/>
            <person name="Toriumi M.J."/>
            <person name="Town C.D."/>
            <person name="Utterback T."/>
            <person name="Van Aken S."/>
            <person name="Vaysberg M."/>
            <person name="Vysotskaia V.S."/>
            <person name="Walker M."/>
            <person name="Wu D."/>
            <person name="Yu G."/>
            <person name="Fraser C.M."/>
            <person name="Venter J.C."/>
            <person name="Davis R.W."/>
        </authorList>
    </citation>
    <scope>NUCLEOTIDE SEQUENCE [LARGE SCALE GENOMIC DNA]</scope>
    <source>
        <strain>cv. Columbia</strain>
    </source>
</reference>
<reference key="2">
    <citation type="journal article" date="2017" name="Plant J.">
        <title>Araport11: a complete reannotation of the Arabidopsis thaliana reference genome.</title>
        <authorList>
            <person name="Cheng C.Y."/>
            <person name="Krishnakumar V."/>
            <person name="Chan A.P."/>
            <person name="Thibaud-Nissen F."/>
            <person name="Schobel S."/>
            <person name="Town C.D."/>
        </authorList>
    </citation>
    <scope>GENOME REANNOTATION</scope>
    <source>
        <strain>cv. Columbia</strain>
    </source>
</reference>
<evidence type="ECO:0000256" key="1">
    <source>
        <dbReference type="SAM" id="MobiDB-lite"/>
    </source>
</evidence>
<organism>
    <name type="scientific">Arabidopsis thaliana</name>
    <name type="common">Mouse-ear cress</name>
    <dbReference type="NCBI Taxonomy" id="3702"/>
    <lineage>
        <taxon>Eukaryota</taxon>
        <taxon>Viridiplantae</taxon>
        <taxon>Streptophyta</taxon>
        <taxon>Embryophyta</taxon>
        <taxon>Tracheophyta</taxon>
        <taxon>Spermatophyta</taxon>
        <taxon>Magnoliopsida</taxon>
        <taxon>eudicotyledons</taxon>
        <taxon>Gunneridae</taxon>
        <taxon>Pentapetalae</taxon>
        <taxon>rosids</taxon>
        <taxon>malvids</taxon>
        <taxon>Brassicales</taxon>
        <taxon>Brassicaceae</taxon>
        <taxon>Camelineae</taxon>
        <taxon>Arabidopsis</taxon>
    </lineage>
</organism>
<protein>
    <recommendedName>
        <fullName>Putative F-box protein At1g26515</fullName>
    </recommendedName>
</protein>
<proteinExistence type="predicted"/>
<name>FB306_ARATH</name>
<gene>
    <name type="ordered locus">At1g26515</name>
    <name type="ORF">T1K7.12</name>
</gene>
<sequence>MKTRSKKTKTENNQEKSKEKNKFDQLPLDLEIEIFRRLPLKSVARFLTLSKSCAATIRSPSFITSFRSPQPCTLIASAPIFNCLHPFKPRVLVDHKLSFFSSSSSSSSSTSFLSRLTCPSSPYPRHMEYYCHYVNGLISVGYGREQIVTNPSTGRFITLPSVRTKRRLVKSFFGYDPASDQYKVLCMTERLYGHQEDPSSQHQVFTLGVKKPWKMLDRTTIPDHRPWTNGVCIDGVVYYIAKTGQGMSQLSLMRYDLRDDNLNVFISLPEEIRTPSLYSDTLLNYEGKLAIAIPVTSYIFDVWVMDQDGEKHEWLKKITFNIEPWQSSFDDIRIKGTTLTGEFIFAPMNNYCDDEFYVFHYKSQQE</sequence>
<feature type="chain" id="PRO_0000281929" description="Putative F-box protein At1g26515">
    <location>
        <begin position="1"/>
        <end position="366"/>
    </location>
</feature>
<feature type="domain" description="F-box">
    <location>
        <begin position="20"/>
        <end position="66"/>
    </location>
</feature>
<feature type="region of interest" description="Disordered" evidence="1">
    <location>
        <begin position="1"/>
        <end position="20"/>
    </location>
</feature>
<feature type="compositionally biased region" description="Basic and acidic residues" evidence="1">
    <location>
        <begin position="8"/>
        <end position="20"/>
    </location>
</feature>
<keyword id="KW-1185">Reference proteome</keyword>
<dbReference type="EMBL" id="AC013427">
    <property type="protein sequence ID" value="AAF98567.1"/>
    <property type="molecule type" value="Genomic_DNA"/>
</dbReference>
<dbReference type="EMBL" id="CP002684">
    <property type="protein sequence ID" value="AEE30699.1"/>
    <property type="molecule type" value="Genomic_DNA"/>
</dbReference>
<dbReference type="PIR" id="A86392">
    <property type="entry name" value="A86392"/>
</dbReference>
<dbReference type="RefSeq" id="NP_001185100.1">
    <property type="nucleotide sequence ID" value="NM_001198171.1"/>
</dbReference>
<dbReference type="SMR" id="Q9FZD6"/>
<dbReference type="STRING" id="3702.Q9FZD6"/>
<dbReference type="PaxDb" id="3702-AT1G26515.1"/>
<dbReference type="EnsemblPlants" id="AT1G26515.1">
    <property type="protein sequence ID" value="AT1G26515.1"/>
    <property type="gene ID" value="AT1G26515"/>
</dbReference>
<dbReference type="GeneID" id="10723080"/>
<dbReference type="Gramene" id="AT1G26515.1">
    <property type="protein sequence ID" value="AT1G26515.1"/>
    <property type="gene ID" value="AT1G26515"/>
</dbReference>
<dbReference type="KEGG" id="ath:AT1G26515"/>
<dbReference type="Araport" id="AT1G26515"/>
<dbReference type="TAIR" id="AT1G26515"/>
<dbReference type="eggNOG" id="ENOG502SXXQ">
    <property type="taxonomic scope" value="Eukaryota"/>
</dbReference>
<dbReference type="HOGENOM" id="CLU_027176_8_0_1"/>
<dbReference type="InParanoid" id="Q9FZD6"/>
<dbReference type="OMA" id="WFCESIF"/>
<dbReference type="OrthoDB" id="1054694at2759"/>
<dbReference type="PhylomeDB" id="Q9FZD6"/>
<dbReference type="PRO" id="PR:Q9FZD6"/>
<dbReference type="Proteomes" id="UP000006548">
    <property type="component" value="Chromosome 1"/>
</dbReference>
<dbReference type="ExpressionAtlas" id="Q9FZD6">
    <property type="expression patterns" value="baseline and differential"/>
</dbReference>
<dbReference type="InterPro" id="IPR013187">
    <property type="entry name" value="F-box-assoc_dom_typ3"/>
</dbReference>
<dbReference type="InterPro" id="IPR017451">
    <property type="entry name" value="F-box-assoc_interact_dom"/>
</dbReference>
<dbReference type="InterPro" id="IPR036047">
    <property type="entry name" value="F-box-like_dom_sf"/>
</dbReference>
<dbReference type="InterPro" id="IPR001810">
    <property type="entry name" value="F-box_dom"/>
</dbReference>
<dbReference type="NCBIfam" id="TIGR01640">
    <property type="entry name" value="F_box_assoc_1"/>
    <property type="match status" value="1"/>
</dbReference>
<dbReference type="PANTHER" id="PTHR31111">
    <property type="entry name" value="BNAA05G37150D PROTEIN-RELATED"/>
    <property type="match status" value="1"/>
</dbReference>
<dbReference type="PANTHER" id="PTHR31111:SF67">
    <property type="entry name" value="F-BOX DOMAIN-CONTAINING PROTEIN"/>
    <property type="match status" value="1"/>
</dbReference>
<dbReference type="Pfam" id="PF00646">
    <property type="entry name" value="F-box"/>
    <property type="match status" value="1"/>
</dbReference>
<dbReference type="Pfam" id="PF08268">
    <property type="entry name" value="FBA_3"/>
    <property type="match status" value="1"/>
</dbReference>
<dbReference type="SUPFAM" id="SSF81383">
    <property type="entry name" value="F-box domain"/>
    <property type="match status" value="1"/>
</dbReference>